<reference key="1">
    <citation type="journal article" date="2006" name="J. Bacteriol.">
        <title>Cross-regulation of biphenyl- and salicylate-catabolic genes by two regulatory systems in Pseudomonas pseudoalcaligenes KF707.</title>
        <authorList>
            <person name="Fujihara H."/>
            <person name="Yoshida H."/>
            <person name="Matsunaga T."/>
            <person name="Goto M."/>
            <person name="Furukawa K."/>
        </authorList>
    </citation>
    <scope>NUCLEOTIDE SEQUENCE [GENOMIC DNA]</scope>
    <source>
        <strain>DSM 10086 / NBRC 110670 / KF707</strain>
    </source>
</reference>
<keyword id="KW-0058">Aromatic hydrocarbons catabolism</keyword>
<keyword id="KW-0520">NAD</keyword>
<keyword id="KW-0560">Oxidoreductase</keyword>
<gene>
    <name type="primary">salG</name>
</gene>
<accession>Q4F8I0</accession>
<organism>
    <name type="scientific">Metapseudomonas furukawaii</name>
    <name type="common">Pseudomonas furukawaii</name>
    <dbReference type="NCBI Taxonomy" id="1149133"/>
    <lineage>
        <taxon>Bacteria</taxon>
        <taxon>Pseudomonadati</taxon>
        <taxon>Pseudomonadota</taxon>
        <taxon>Gammaproteobacteria</taxon>
        <taxon>Pseudomonadales</taxon>
        <taxon>Pseudomonadaceae</taxon>
        <taxon>Metapseudomonas</taxon>
    </lineage>
</organism>
<evidence type="ECO:0000255" key="1">
    <source>
        <dbReference type="HAMAP-Rule" id="MF_01657"/>
    </source>
</evidence>
<proteinExistence type="inferred from homology"/>
<dbReference type="EC" id="1.2.1.10" evidence="1"/>
<dbReference type="EMBL" id="DQ100350">
    <property type="protein sequence ID" value="AAZ08070.1"/>
    <property type="molecule type" value="Genomic_DNA"/>
</dbReference>
<dbReference type="GO" id="GO:0008774">
    <property type="term" value="F:acetaldehyde dehydrogenase (acetylating) activity"/>
    <property type="evidence" value="ECO:0007669"/>
    <property type="project" value="UniProtKB-UniRule"/>
</dbReference>
<dbReference type="GO" id="GO:0051287">
    <property type="term" value="F:NAD binding"/>
    <property type="evidence" value="ECO:0007669"/>
    <property type="project" value="UniProtKB-UniRule"/>
</dbReference>
<dbReference type="GO" id="GO:0009056">
    <property type="term" value="P:catabolic process"/>
    <property type="evidence" value="ECO:0007669"/>
    <property type="project" value="UniProtKB-KW"/>
</dbReference>
<dbReference type="CDD" id="cd23933">
    <property type="entry name" value="ALDH_C"/>
    <property type="match status" value="1"/>
</dbReference>
<dbReference type="Gene3D" id="3.30.360.10">
    <property type="entry name" value="Dihydrodipicolinate Reductase, domain 2"/>
    <property type="match status" value="1"/>
</dbReference>
<dbReference type="Gene3D" id="3.40.50.720">
    <property type="entry name" value="NAD(P)-binding Rossmann-like Domain"/>
    <property type="match status" value="1"/>
</dbReference>
<dbReference type="HAMAP" id="MF_01657">
    <property type="entry name" value="Ac_ald_DH_ac"/>
    <property type="match status" value="1"/>
</dbReference>
<dbReference type="InterPro" id="IPR003361">
    <property type="entry name" value="Acetaldehyde_dehydrogenase"/>
</dbReference>
<dbReference type="InterPro" id="IPR015426">
    <property type="entry name" value="Acetylaldehyde_DH_C"/>
</dbReference>
<dbReference type="InterPro" id="IPR036291">
    <property type="entry name" value="NAD(P)-bd_dom_sf"/>
</dbReference>
<dbReference type="InterPro" id="IPR000534">
    <property type="entry name" value="Semialdehyde_DH_NAD-bd"/>
</dbReference>
<dbReference type="NCBIfam" id="TIGR03215">
    <property type="entry name" value="ac_ald_DH_ac"/>
    <property type="match status" value="1"/>
</dbReference>
<dbReference type="NCBIfam" id="NF006157">
    <property type="entry name" value="PRK08300.1"/>
    <property type="match status" value="1"/>
</dbReference>
<dbReference type="Pfam" id="PF09290">
    <property type="entry name" value="AcetDehyd-dimer"/>
    <property type="match status" value="1"/>
</dbReference>
<dbReference type="PIRSF" id="PIRSF015689">
    <property type="entry name" value="Actaldh_dh_actl"/>
    <property type="match status" value="1"/>
</dbReference>
<dbReference type="SMART" id="SM00859">
    <property type="entry name" value="Semialdhyde_dh"/>
    <property type="match status" value="1"/>
</dbReference>
<dbReference type="SUPFAM" id="SSF55347">
    <property type="entry name" value="Glyceraldehyde-3-phosphate dehydrogenase-like, C-terminal domain"/>
    <property type="match status" value="1"/>
</dbReference>
<dbReference type="SUPFAM" id="SSF51735">
    <property type="entry name" value="NAD(P)-binding Rossmann-fold domains"/>
    <property type="match status" value="1"/>
</dbReference>
<protein>
    <recommendedName>
        <fullName evidence="1">Acetaldehyde dehydrogenase 1</fullName>
        <ecNumber evidence="1">1.2.1.10</ecNumber>
    </recommendedName>
    <alternativeName>
        <fullName evidence="1">Acetaldehyde dehydrogenase [acetylating] 1</fullName>
    </alternativeName>
</protein>
<sequence length="307" mass="33899">MSKKLKAAIIGPGNIGTDLVMKMLRSEWIEPVWMVGIDPESDGLKRARRFGLKTTAEGVDGLLPHVLEDDIRIAFDATSAYVHAENSRKLNEWGVLMVDLTPAAIGRYCVLRVNIKQNVGKLEMNVNMVTCGGQATSPMVAGVSRVQPVGYGKIVAKVFSRSIGPGTRKNIEEFNRTNAGAIEKVGGGKEGNAIIVLNTAHASFMICYTIHFFIKTEPDENPIIPSVHPIIAELQNYFPGYRLKNRPLFYRNPFSIFIEFEPLADYLXNYPGNLDIMTPPALPTLDIFPDKIAIATIQLPCLEPHLP</sequence>
<comment type="catalytic activity">
    <reaction evidence="1">
        <text>acetaldehyde + NAD(+) + CoA = acetyl-CoA + NADH + H(+)</text>
        <dbReference type="Rhea" id="RHEA:23288"/>
        <dbReference type="ChEBI" id="CHEBI:15343"/>
        <dbReference type="ChEBI" id="CHEBI:15378"/>
        <dbReference type="ChEBI" id="CHEBI:57287"/>
        <dbReference type="ChEBI" id="CHEBI:57288"/>
        <dbReference type="ChEBI" id="CHEBI:57540"/>
        <dbReference type="ChEBI" id="CHEBI:57945"/>
        <dbReference type="EC" id="1.2.1.10"/>
    </reaction>
</comment>
<comment type="similarity">
    <text evidence="1">Belongs to the acetaldehyde dehydrogenase family.</text>
</comment>
<name>ACDH1_METFU</name>
<feature type="chain" id="PRO_0000387706" description="Acetaldehyde dehydrogenase 1">
    <location>
        <begin position="1"/>
        <end position="307"/>
    </location>
</feature>
<feature type="active site" description="Acyl-thioester intermediate" evidence="1">
    <location>
        <position position="131"/>
    </location>
</feature>
<feature type="binding site" evidence="1">
    <location>
        <begin position="162"/>
        <end position="170"/>
    </location>
    <ligand>
        <name>NAD(+)</name>
        <dbReference type="ChEBI" id="CHEBI:57540"/>
    </ligand>
</feature>
<feature type="binding site" evidence="1">
    <location>
        <position position="273"/>
    </location>
    <ligand>
        <name>NAD(+)</name>
        <dbReference type="ChEBI" id="CHEBI:57540"/>
    </ligand>
</feature>